<sequence>MSASTSPLIRQRGRESYEITYAAMRAFTDARTAQTADELWIVEHPPVFTLGLAADPTHVLDAHDIPVVQTDRGGEVTYHGPGQVVIYLLLDLRRNHADARIFARELVNKIEQAVIDTLAAYNLACERKAGAPGIYLSDGPLQGAKIAALGLKIRGNGCTYHGVSLNVAMDLTPFSWINPCGYEGLVTIDMQSLGAQTTLTAVQDTLAEKLTRHLSG</sequence>
<comment type="function">
    <text evidence="1">Catalyzes the transfer of endogenously produced octanoic acid from octanoyl-acyl-carrier-protein onto the lipoyl domains of lipoate-dependent enzymes. Lipoyl-ACP can also act as a substrate although octanoyl-ACP is likely to be the physiological substrate.</text>
</comment>
<comment type="catalytic activity">
    <reaction evidence="1">
        <text>octanoyl-[ACP] + L-lysyl-[protein] = N(6)-octanoyl-L-lysyl-[protein] + holo-[ACP] + H(+)</text>
        <dbReference type="Rhea" id="RHEA:17665"/>
        <dbReference type="Rhea" id="RHEA-COMP:9636"/>
        <dbReference type="Rhea" id="RHEA-COMP:9685"/>
        <dbReference type="Rhea" id="RHEA-COMP:9752"/>
        <dbReference type="Rhea" id="RHEA-COMP:9928"/>
        <dbReference type="ChEBI" id="CHEBI:15378"/>
        <dbReference type="ChEBI" id="CHEBI:29969"/>
        <dbReference type="ChEBI" id="CHEBI:64479"/>
        <dbReference type="ChEBI" id="CHEBI:78463"/>
        <dbReference type="ChEBI" id="CHEBI:78809"/>
        <dbReference type="EC" id="2.3.1.181"/>
    </reaction>
</comment>
<comment type="pathway">
    <text evidence="1">Protein modification; protein lipoylation via endogenous pathway; protein N(6)-(lipoyl)lysine from octanoyl-[acyl-carrier-protein]: step 1/2.</text>
</comment>
<comment type="subcellular location">
    <subcellularLocation>
        <location evidence="1">Cytoplasm</location>
    </subcellularLocation>
</comment>
<comment type="miscellaneous">
    <text evidence="1">In the reaction, the free carboxyl group of octanoic acid is attached via an amide linkage to the epsilon-amino group of a specific lysine residue of lipoyl domains of lipoate-dependent enzymes.</text>
</comment>
<comment type="similarity">
    <text evidence="1">Belongs to the LipB family.</text>
</comment>
<name>LIPB_HERAR</name>
<reference key="1">
    <citation type="journal article" date="2007" name="PLoS Genet.">
        <title>A tale of two oxidation states: bacterial colonization of arsenic-rich environments.</title>
        <authorList>
            <person name="Muller D."/>
            <person name="Medigue C."/>
            <person name="Koechler S."/>
            <person name="Barbe V."/>
            <person name="Barakat M."/>
            <person name="Talla E."/>
            <person name="Bonnefoy V."/>
            <person name="Krin E."/>
            <person name="Arsene-Ploetze F."/>
            <person name="Carapito C."/>
            <person name="Chandler M."/>
            <person name="Cournoyer B."/>
            <person name="Cruveiller S."/>
            <person name="Dossat C."/>
            <person name="Duval S."/>
            <person name="Heymann M."/>
            <person name="Leize E."/>
            <person name="Lieutaud A."/>
            <person name="Lievremont D."/>
            <person name="Makita Y."/>
            <person name="Mangenot S."/>
            <person name="Nitschke W."/>
            <person name="Ortet P."/>
            <person name="Perdrial N."/>
            <person name="Schoepp B."/>
            <person name="Siguier P."/>
            <person name="Simeonova D.D."/>
            <person name="Rouy Z."/>
            <person name="Segurens B."/>
            <person name="Turlin E."/>
            <person name="Vallenet D."/>
            <person name="van Dorsselaer A."/>
            <person name="Weiss S."/>
            <person name="Weissenbach J."/>
            <person name="Lett M.-C."/>
            <person name="Danchin A."/>
            <person name="Bertin P.N."/>
        </authorList>
    </citation>
    <scope>NUCLEOTIDE SEQUENCE [LARGE SCALE GENOMIC DNA]</scope>
    <source>
        <strain>ULPAs1</strain>
    </source>
</reference>
<proteinExistence type="inferred from homology"/>
<accession>A4G9C5</accession>
<evidence type="ECO:0000255" key="1">
    <source>
        <dbReference type="HAMAP-Rule" id="MF_00013"/>
    </source>
</evidence>
<evidence type="ECO:0000255" key="2">
    <source>
        <dbReference type="PROSITE-ProRule" id="PRU01067"/>
    </source>
</evidence>
<protein>
    <recommendedName>
        <fullName evidence="1">Octanoyltransferase</fullName>
        <ecNumber evidence="1">2.3.1.181</ecNumber>
    </recommendedName>
    <alternativeName>
        <fullName evidence="1">Lipoate-protein ligase B</fullName>
    </alternativeName>
    <alternativeName>
        <fullName evidence="1">Lipoyl/octanoyl transferase</fullName>
    </alternativeName>
    <alternativeName>
        <fullName evidence="1">Octanoyl-[acyl-carrier-protein]-protein N-octanoyltransferase</fullName>
    </alternativeName>
</protein>
<organism>
    <name type="scientific">Herminiimonas arsenicoxydans</name>
    <dbReference type="NCBI Taxonomy" id="204773"/>
    <lineage>
        <taxon>Bacteria</taxon>
        <taxon>Pseudomonadati</taxon>
        <taxon>Pseudomonadota</taxon>
        <taxon>Betaproteobacteria</taxon>
        <taxon>Burkholderiales</taxon>
        <taxon>Oxalobacteraceae</taxon>
        <taxon>Herminiimonas</taxon>
    </lineage>
</organism>
<dbReference type="EC" id="2.3.1.181" evidence="1"/>
<dbReference type="EMBL" id="CU207211">
    <property type="protein sequence ID" value="CAL63112.1"/>
    <property type="molecule type" value="Genomic_DNA"/>
</dbReference>
<dbReference type="SMR" id="A4G9C5"/>
<dbReference type="STRING" id="204773.HEAR3002"/>
<dbReference type="KEGG" id="har:HEAR3002"/>
<dbReference type="eggNOG" id="COG0321">
    <property type="taxonomic scope" value="Bacteria"/>
</dbReference>
<dbReference type="HOGENOM" id="CLU_035168_3_1_4"/>
<dbReference type="OrthoDB" id="9787061at2"/>
<dbReference type="UniPathway" id="UPA00538">
    <property type="reaction ID" value="UER00592"/>
</dbReference>
<dbReference type="Proteomes" id="UP000006697">
    <property type="component" value="Chromosome"/>
</dbReference>
<dbReference type="GO" id="GO:0005737">
    <property type="term" value="C:cytoplasm"/>
    <property type="evidence" value="ECO:0007669"/>
    <property type="project" value="UniProtKB-SubCell"/>
</dbReference>
<dbReference type="GO" id="GO:0033819">
    <property type="term" value="F:lipoyl(octanoyl) transferase activity"/>
    <property type="evidence" value="ECO:0007669"/>
    <property type="project" value="UniProtKB-EC"/>
</dbReference>
<dbReference type="GO" id="GO:0036211">
    <property type="term" value="P:protein modification process"/>
    <property type="evidence" value="ECO:0007669"/>
    <property type="project" value="InterPro"/>
</dbReference>
<dbReference type="CDD" id="cd16444">
    <property type="entry name" value="LipB"/>
    <property type="match status" value="1"/>
</dbReference>
<dbReference type="FunFam" id="3.30.930.10:FF:000020">
    <property type="entry name" value="Octanoyltransferase"/>
    <property type="match status" value="1"/>
</dbReference>
<dbReference type="Gene3D" id="3.30.930.10">
    <property type="entry name" value="Bira Bifunctional Protein, Domain 2"/>
    <property type="match status" value="1"/>
</dbReference>
<dbReference type="HAMAP" id="MF_00013">
    <property type="entry name" value="LipB"/>
    <property type="match status" value="1"/>
</dbReference>
<dbReference type="InterPro" id="IPR045864">
    <property type="entry name" value="aa-tRNA-synth_II/BPL/LPL"/>
</dbReference>
<dbReference type="InterPro" id="IPR004143">
    <property type="entry name" value="BPL_LPL_catalytic"/>
</dbReference>
<dbReference type="InterPro" id="IPR000544">
    <property type="entry name" value="Octanoyltransferase"/>
</dbReference>
<dbReference type="InterPro" id="IPR020605">
    <property type="entry name" value="Octanoyltransferase_CS"/>
</dbReference>
<dbReference type="NCBIfam" id="TIGR00214">
    <property type="entry name" value="lipB"/>
    <property type="match status" value="1"/>
</dbReference>
<dbReference type="NCBIfam" id="NF010922">
    <property type="entry name" value="PRK14342.1"/>
    <property type="match status" value="1"/>
</dbReference>
<dbReference type="NCBIfam" id="NF010923">
    <property type="entry name" value="PRK14343.1"/>
    <property type="match status" value="1"/>
</dbReference>
<dbReference type="PANTHER" id="PTHR10993:SF7">
    <property type="entry name" value="LIPOYLTRANSFERASE 2, MITOCHONDRIAL-RELATED"/>
    <property type="match status" value="1"/>
</dbReference>
<dbReference type="PANTHER" id="PTHR10993">
    <property type="entry name" value="OCTANOYLTRANSFERASE"/>
    <property type="match status" value="1"/>
</dbReference>
<dbReference type="Pfam" id="PF21948">
    <property type="entry name" value="LplA-B_cat"/>
    <property type="match status" value="1"/>
</dbReference>
<dbReference type="PIRSF" id="PIRSF016262">
    <property type="entry name" value="LPLase"/>
    <property type="match status" value="1"/>
</dbReference>
<dbReference type="SUPFAM" id="SSF55681">
    <property type="entry name" value="Class II aaRS and biotin synthetases"/>
    <property type="match status" value="1"/>
</dbReference>
<dbReference type="PROSITE" id="PS51733">
    <property type="entry name" value="BPL_LPL_CATALYTIC"/>
    <property type="match status" value="1"/>
</dbReference>
<dbReference type="PROSITE" id="PS01313">
    <property type="entry name" value="LIPB"/>
    <property type="match status" value="1"/>
</dbReference>
<gene>
    <name evidence="1" type="primary">lipB</name>
    <name type="ordered locus">HEAR3002</name>
</gene>
<keyword id="KW-0012">Acyltransferase</keyword>
<keyword id="KW-0963">Cytoplasm</keyword>
<keyword id="KW-1185">Reference proteome</keyword>
<keyword id="KW-0808">Transferase</keyword>
<feature type="chain" id="PRO_0000321638" description="Octanoyltransferase">
    <location>
        <begin position="1"/>
        <end position="216"/>
    </location>
</feature>
<feature type="domain" description="BPL/LPL catalytic" evidence="2">
    <location>
        <begin position="33"/>
        <end position="216"/>
    </location>
</feature>
<feature type="active site" description="Acyl-thioester intermediate" evidence="1">
    <location>
        <position position="180"/>
    </location>
</feature>
<feature type="binding site" evidence="1">
    <location>
        <begin position="72"/>
        <end position="79"/>
    </location>
    <ligand>
        <name>substrate</name>
    </ligand>
</feature>
<feature type="binding site" evidence="1">
    <location>
        <begin position="148"/>
        <end position="150"/>
    </location>
    <ligand>
        <name>substrate</name>
    </ligand>
</feature>
<feature type="binding site" evidence="1">
    <location>
        <begin position="162"/>
        <end position="164"/>
    </location>
    <ligand>
        <name>substrate</name>
    </ligand>
</feature>
<feature type="site" description="Lowers pKa of active site Cys" evidence="1">
    <location>
        <position position="145"/>
    </location>
</feature>